<gene>
    <name evidence="1" type="primary">ybeY</name>
    <name type="ordered locus">MCAP_0508</name>
</gene>
<organism>
    <name type="scientific">Mycoplasma capricolum subsp. capricolum (strain California kid / ATCC 27343 / NCTC 10154)</name>
    <dbReference type="NCBI Taxonomy" id="340047"/>
    <lineage>
        <taxon>Bacteria</taxon>
        <taxon>Bacillati</taxon>
        <taxon>Mycoplasmatota</taxon>
        <taxon>Mollicutes</taxon>
        <taxon>Mycoplasmataceae</taxon>
        <taxon>Mycoplasma</taxon>
    </lineage>
</organism>
<comment type="function">
    <text evidence="1">Single strand-specific metallo-endoribonuclease involved in late-stage 70S ribosome quality control and in maturation of the 3' terminus of the 16S rRNA.</text>
</comment>
<comment type="cofactor">
    <cofactor evidence="1">
        <name>Zn(2+)</name>
        <dbReference type="ChEBI" id="CHEBI:29105"/>
    </cofactor>
    <text evidence="1">Binds 1 zinc ion.</text>
</comment>
<comment type="subcellular location">
    <subcellularLocation>
        <location evidence="1">Cytoplasm</location>
    </subcellularLocation>
</comment>
<comment type="similarity">
    <text evidence="1">Belongs to the endoribonuclease YbeY family.</text>
</comment>
<dbReference type="EC" id="3.1.-.-" evidence="1"/>
<dbReference type="EMBL" id="CP000123">
    <property type="protein sequence ID" value="ABC01813.1"/>
    <property type="molecule type" value="Genomic_DNA"/>
</dbReference>
<dbReference type="RefSeq" id="WP_011387379.1">
    <property type="nucleotide sequence ID" value="NC_007633.1"/>
</dbReference>
<dbReference type="SMR" id="Q2SRY2"/>
<dbReference type="GeneID" id="23778536"/>
<dbReference type="KEGG" id="mcp:MCAP_0508"/>
<dbReference type="HOGENOM" id="CLU_106710_3_0_14"/>
<dbReference type="PhylomeDB" id="Q2SRY2"/>
<dbReference type="Proteomes" id="UP000001928">
    <property type="component" value="Chromosome"/>
</dbReference>
<dbReference type="GO" id="GO:0005737">
    <property type="term" value="C:cytoplasm"/>
    <property type="evidence" value="ECO:0007669"/>
    <property type="project" value="UniProtKB-SubCell"/>
</dbReference>
<dbReference type="GO" id="GO:0004222">
    <property type="term" value="F:metalloendopeptidase activity"/>
    <property type="evidence" value="ECO:0007669"/>
    <property type="project" value="InterPro"/>
</dbReference>
<dbReference type="GO" id="GO:0004521">
    <property type="term" value="F:RNA endonuclease activity"/>
    <property type="evidence" value="ECO:0007669"/>
    <property type="project" value="UniProtKB-UniRule"/>
</dbReference>
<dbReference type="GO" id="GO:0008270">
    <property type="term" value="F:zinc ion binding"/>
    <property type="evidence" value="ECO:0007669"/>
    <property type="project" value="UniProtKB-UniRule"/>
</dbReference>
<dbReference type="GO" id="GO:0006364">
    <property type="term" value="P:rRNA processing"/>
    <property type="evidence" value="ECO:0007669"/>
    <property type="project" value="UniProtKB-UniRule"/>
</dbReference>
<dbReference type="Gene3D" id="3.40.390.30">
    <property type="entry name" value="Metalloproteases ('zincins'), catalytic domain"/>
    <property type="match status" value="1"/>
</dbReference>
<dbReference type="HAMAP" id="MF_00009">
    <property type="entry name" value="Endoribonucl_YbeY"/>
    <property type="match status" value="1"/>
</dbReference>
<dbReference type="InterPro" id="IPR023091">
    <property type="entry name" value="MetalPrtase_cat_dom_sf_prd"/>
</dbReference>
<dbReference type="InterPro" id="IPR002036">
    <property type="entry name" value="YbeY"/>
</dbReference>
<dbReference type="InterPro" id="IPR020549">
    <property type="entry name" value="YbeY_CS"/>
</dbReference>
<dbReference type="NCBIfam" id="TIGR00043">
    <property type="entry name" value="rRNA maturation RNase YbeY"/>
    <property type="match status" value="1"/>
</dbReference>
<dbReference type="PANTHER" id="PTHR46986">
    <property type="entry name" value="ENDORIBONUCLEASE YBEY, CHLOROPLASTIC"/>
    <property type="match status" value="1"/>
</dbReference>
<dbReference type="PANTHER" id="PTHR46986:SF1">
    <property type="entry name" value="ENDORIBONUCLEASE YBEY, CHLOROPLASTIC"/>
    <property type="match status" value="1"/>
</dbReference>
<dbReference type="Pfam" id="PF02130">
    <property type="entry name" value="YbeY"/>
    <property type="match status" value="1"/>
</dbReference>
<dbReference type="SUPFAM" id="SSF55486">
    <property type="entry name" value="Metalloproteases ('zincins'), catalytic domain"/>
    <property type="match status" value="1"/>
</dbReference>
<dbReference type="PROSITE" id="PS01306">
    <property type="entry name" value="UPF0054"/>
    <property type="match status" value="1"/>
</dbReference>
<protein>
    <recommendedName>
        <fullName evidence="1">Endoribonuclease YbeY</fullName>
        <ecNumber evidence="1">3.1.-.-</ecNumber>
    </recommendedName>
</protein>
<keyword id="KW-0963">Cytoplasm</keyword>
<keyword id="KW-0255">Endonuclease</keyword>
<keyword id="KW-0378">Hydrolase</keyword>
<keyword id="KW-0479">Metal-binding</keyword>
<keyword id="KW-0540">Nuclease</keyword>
<keyword id="KW-0690">Ribosome biogenesis</keyword>
<keyword id="KW-0698">rRNA processing</keyword>
<keyword id="KW-0862">Zinc</keyword>
<reference key="1">
    <citation type="submission" date="2005-09" db="EMBL/GenBank/DDBJ databases">
        <authorList>
            <person name="Glass J.I."/>
            <person name="Lartigue C."/>
            <person name="Pfannkoch C."/>
            <person name="Baden-Tillson H."/>
            <person name="Smith H.O."/>
            <person name="Venter J.C."/>
            <person name="Roske K."/>
            <person name="Wise K.S."/>
            <person name="Calcutt M.J."/>
            <person name="Nelson W.C."/>
            <person name="Nierman W.C."/>
        </authorList>
    </citation>
    <scope>NUCLEOTIDE SEQUENCE [LARGE SCALE GENOMIC DNA]</scope>
    <source>
        <strain>California kid / ATCC 27343 / NCTC 10154</strain>
    </source>
</reference>
<accession>Q2SRY2</accession>
<proteinExistence type="inferred from homology"/>
<name>YBEY_MYCCT</name>
<evidence type="ECO:0000255" key="1">
    <source>
        <dbReference type="HAMAP-Rule" id="MF_00009"/>
    </source>
</evidence>
<sequence length="164" mass="19564">MLKINYFNDTDVNMNSWKKFANKILKIAYNYFNFNYDIELSITFVDDLKAQQINQQYRNHSYIADVTSFPVEMTENEIKAIGFRELGDMFINLSEAKRKAIKYNHDLNSEMGFLFVHGFLHLLGYDHENLDDEKIMFDLQDQILKLNNLVYIIKFNEEDYLESN</sequence>
<feature type="chain" id="PRO_0000284248" description="Endoribonuclease YbeY">
    <location>
        <begin position="1"/>
        <end position="164"/>
    </location>
</feature>
<feature type="binding site" evidence="1">
    <location>
        <position position="117"/>
    </location>
    <ligand>
        <name>Zn(2+)</name>
        <dbReference type="ChEBI" id="CHEBI:29105"/>
        <note>catalytic</note>
    </ligand>
</feature>
<feature type="binding site" evidence="1">
    <location>
        <position position="121"/>
    </location>
    <ligand>
        <name>Zn(2+)</name>
        <dbReference type="ChEBI" id="CHEBI:29105"/>
        <note>catalytic</note>
    </ligand>
</feature>
<feature type="binding site" evidence="1">
    <location>
        <position position="127"/>
    </location>
    <ligand>
        <name>Zn(2+)</name>
        <dbReference type="ChEBI" id="CHEBI:29105"/>
        <note>catalytic</note>
    </ligand>
</feature>